<feature type="chain" id="PRO_0000361216" description="Putative S-adenosyl-L-methionine-dependent methyltransferase Mmcs_0089">
    <location>
        <begin position="1"/>
        <end position="263"/>
    </location>
</feature>
<feature type="binding site" evidence="1">
    <location>
        <position position="121"/>
    </location>
    <ligand>
        <name>S-adenosyl-L-methionine</name>
        <dbReference type="ChEBI" id="CHEBI:59789"/>
    </ligand>
</feature>
<feature type="binding site" evidence="1">
    <location>
        <begin position="150"/>
        <end position="151"/>
    </location>
    <ligand>
        <name>S-adenosyl-L-methionine</name>
        <dbReference type="ChEBI" id="CHEBI:59789"/>
    </ligand>
</feature>
<protein>
    <recommendedName>
        <fullName>Putative S-adenosyl-L-methionine-dependent methyltransferase Mmcs_0089</fullName>
        <ecNumber>2.1.1.-</ecNumber>
    </recommendedName>
</protein>
<sequence>MRRQEAGTSSLATRVGPEVLTTAAVASVTGCDDPLAAVLLGRPKVIEVLQRSAELIDRVPALAAAHHQIADYHAMRSRFFDAYLADAAAEGIRQCVVLAAGLDTRAFRLPWPDGMTVFEIDQPTVLRYKENALTAHGARPAADWHPVGVESDMPWPRRLWESGFNHNEPTIWLAEGLLPLPDATQDALISEIDGLSAAGSRIAFDDVLGMCSGRSDAPGWLTSRGWWTDVVEARHLPELSGRRDDDAQSYTAHAALVTAEKIA</sequence>
<name>Y089_MYCSS</name>
<accession>Q1BFX3</accession>
<organism>
    <name type="scientific">Mycobacterium sp. (strain MCS)</name>
    <dbReference type="NCBI Taxonomy" id="164756"/>
    <lineage>
        <taxon>Bacteria</taxon>
        <taxon>Bacillati</taxon>
        <taxon>Actinomycetota</taxon>
        <taxon>Actinomycetes</taxon>
        <taxon>Mycobacteriales</taxon>
        <taxon>Mycobacteriaceae</taxon>
        <taxon>Mycobacterium</taxon>
    </lineage>
</organism>
<keyword id="KW-0489">Methyltransferase</keyword>
<keyword id="KW-0949">S-adenosyl-L-methionine</keyword>
<keyword id="KW-0808">Transferase</keyword>
<comment type="function">
    <text evidence="1">Exhibits S-adenosyl-L-methionine-dependent methyltransferase activity.</text>
</comment>
<comment type="similarity">
    <text evidence="2">Belongs to the UPF0677 family.</text>
</comment>
<gene>
    <name type="ordered locus">Mmcs_0089</name>
</gene>
<reference key="1">
    <citation type="submission" date="2006-06" db="EMBL/GenBank/DDBJ databases">
        <title>Complete sequence of chromosome of Mycobacterium sp. MCS.</title>
        <authorList>
            <consortium name="US DOE Joint Genome Institute"/>
            <person name="Copeland A."/>
            <person name="Lucas S."/>
            <person name="Lapidus A."/>
            <person name="Barry K."/>
            <person name="Detter J.C."/>
            <person name="Glavina del Rio T."/>
            <person name="Hammon N."/>
            <person name="Israni S."/>
            <person name="Dalin E."/>
            <person name="Tice H."/>
            <person name="Pitluck S."/>
            <person name="Martinez M."/>
            <person name="Schmutz J."/>
            <person name="Larimer F."/>
            <person name="Land M."/>
            <person name="Hauser L."/>
            <person name="Kyrpides N."/>
            <person name="Kim E."/>
            <person name="Miller C.D."/>
            <person name="Hughes J.E."/>
            <person name="Anderson A.J."/>
            <person name="Sims R.C."/>
            <person name="Richardson P."/>
        </authorList>
    </citation>
    <scope>NUCLEOTIDE SEQUENCE [LARGE SCALE GENOMIC DNA]</scope>
    <source>
        <strain>MCS</strain>
    </source>
</reference>
<proteinExistence type="inferred from homology"/>
<dbReference type="EC" id="2.1.1.-"/>
<dbReference type="EMBL" id="CP000384">
    <property type="protein sequence ID" value="ABG06211.1"/>
    <property type="molecule type" value="Genomic_DNA"/>
</dbReference>
<dbReference type="SMR" id="Q1BFX3"/>
<dbReference type="KEGG" id="mmc:Mmcs_0089"/>
<dbReference type="HOGENOM" id="CLU_056160_2_0_11"/>
<dbReference type="BioCyc" id="MSP164756:G1G6O-95-MONOMER"/>
<dbReference type="GO" id="GO:0008168">
    <property type="term" value="F:methyltransferase activity"/>
    <property type="evidence" value="ECO:0007669"/>
    <property type="project" value="UniProtKB-KW"/>
</dbReference>
<dbReference type="GO" id="GO:0032259">
    <property type="term" value="P:methylation"/>
    <property type="evidence" value="ECO:0007669"/>
    <property type="project" value="UniProtKB-KW"/>
</dbReference>
<dbReference type="Gene3D" id="3.40.50.150">
    <property type="entry name" value="Vaccinia Virus protein VP39"/>
    <property type="match status" value="1"/>
</dbReference>
<dbReference type="InterPro" id="IPR007213">
    <property type="entry name" value="Ppm1/Ppm2/Tcmp"/>
</dbReference>
<dbReference type="InterPro" id="IPR029063">
    <property type="entry name" value="SAM-dependent_MTases_sf"/>
</dbReference>
<dbReference type="InterPro" id="IPR011610">
    <property type="entry name" value="SAM_mthyl_Trfase_ML2640-like"/>
</dbReference>
<dbReference type="NCBIfam" id="TIGR00027">
    <property type="entry name" value="mthyl_TIGR00027"/>
    <property type="match status" value="1"/>
</dbReference>
<dbReference type="PANTHER" id="PTHR43619">
    <property type="entry name" value="S-ADENOSYL-L-METHIONINE-DEPENDENT METHYLTRANSFERASE YKTD-RELATED"/>
    <property type="match status" value="1"/>
</dbReference>
<dbReference type="PANTHER" id="PTHR43619:SF2">
    <property type="entry name" value="S-ADENOSYL-L-METHIONINE-DEPENDENT METHYLTRANSFERASES SUPERFAMILY PROTEIN"/>
    <property type="match status" value="1"/>
</dbReference>
<dbReference type="Pfam" id="PF04072">
    <property type="entry name" value="LCM"/>
    <property type="match status" value="1"/>
</dbReference>
<dbReference type="SUPFAM" id="SSF53335">
    <property type="entry name" value="S-adenosyl-L-methionine-dependent methyltransferases"/>
    <property type="match status" value="1"/>
</dbReference>
<evidence type="ECO:0000250" key="1"/>
<evidence type="ECO:0000305" key="2"/>